<accession>Q9FZC4</accession>
<reference key="1">
    <citation type="journal article" date="2000" name="Nature">
        <title>Sequence and analysis of chromosome 1 of the plant Arabidopsis thaliana.</title>
        <authorList>
            <person name="Theologis A."/>
            <person name="Ecker J.R."/>
            <person name="Palm C.J."/>
            <person name="Federspiel N.A."/>
            <person name="Kaul S."/>
            <person name="White O."/>
            <person name="Alonso J."/>
            <person name="Altafi H."/>
            <person name="Araujo R."/>
            <person name="Bowman C.L."/>
            <person name="Brooks S.Y."/>
            <person name="Buehler E."/>
            <person name="Chan A."/>
            <person name="Chao Q."/>
            <person name="Chen H."/>
            <person name="Cheuk R.F."/>
            <person name="Chin C.W."/>
            <person name="Chung M.K."/>
            <person name="Conn L."/>
            <person name="Conway A.B."/>
            <person name="Conway A.R."/>
            <person name="Creasy T.H."/>
            <person name="Dewar K."/>
            <person name="Dunn P."/>
            <person name="Etgu P."/>
            <person name="Feldblyum T.V."/>
            <person name="Feng J.-D."/>
            <person name="Fong B."/>
            <person name="Fujii C.Y."/>
            <person name="Gill J.E."/>
            <person name="Goldsmith A.D."/>
            <person name="Haas B."/>
            <person name="Hansen N.F."/>
            <person name="Hughes B."/>
            <person name="Huizar L."/>
            <person name="Hunter J.L."/>
            <person name="Jenkins J."/>
            <person name="Johnson-Hopson C."/>
            <person name="Khan S."/>
            <person name="Khaykin E."/>
            <person name="Kim C.J."/>
            <person name="Koo H.L."/>
            <person name="Kremenetskaia I."/>
            <person name="Kurtz D.B."/>
            <person name="Kwan A."/>
            <person name="Lam B."/>
            <person name="Langin-Hooper S."/>
            <person name="Lee A."/>
            <person name="Lee J.M."/>
            <person name="Lenz C.A."/>
            <person name="Li J.H."/>
            <person name="Li Y.-P."/>
            <person name="Lin X."/>
            <person name="Liu S.X."/>
            <person name="Liu Z.A."/>
            <person name="Luros J.S."/>
            <person name="Maiti R."/>
            <person name="Marziali A."/>
            <person name="Militscher J."/>
            <person name="Miranda M."/>
            <person name="Nguyen M."/>
            <person name="Nierman W.C."/>
            <person name="Osborne B.I."/>
            <person name="Pai G."/>
            <person name="Peterson J."/>
            <person name="Pham P.K."/>
            <person name="Rizzo M."/>
            <person name="Rooney T."/>
            <person name="Rowley D."/>
            <person name="Sakano H."/>
            <person name="Salzberg S.L."/>
            <person name="Schwartz J.R."/>
            <person name="Shinn P."/>
            <person name="Southwick A.M."/>
            <person name="Sun H."/>
            <person name="Tallon L.J."/>
            <person name="Tambunga G."/>
            <person name="Toriumi M.J."/>
            <person name="Town C.D."/>
            <person name="Utterback T."/>
            <person name="Van Aken S."/>
            <person name="Vaysberg M."/>
            <person name="Vysotskaia V.S."/>
            <person name="Walker M."/>
            <person name="Wu D."/>
            <person name="Yu G."/>
            <person name="Fraser C.M."/>
            <person name="Venter J.C."/>
            <person name="Davis R.W."/>
        </authorList>
    </citation>
    <scope>NUCLEOTIDE SEQUENCE [LARGE SCALE GENOMIC DNA]</scope>
    <source>
        <strain>cv. Columbia</strain>
    </source>
</reference>
<reference key="2">
    <citation type="journal article" date="2017" name="Plant J.">
        <title>Araport11: a complete reannotation of the Arabidopsis thaliana reference genome.</title>
        <authorList>
            <person name="Cheng C.Y."/>
            <person name="Krishnakumar V."/>
            <person name="Chan A.P."/>
            <person name="Thibaud-Nissen F."/>
            <person name="Schobel S."/>
            <person name="Town C.D."/>
        </authorList>
    </citation>
    <scope>GENOME REANNOTATION</scope>
    <source>
        <strain>cv. Columbia</strain>
    </source>
</reference>
<reference key="3">
    <citation type="journal article" date="2003" name="Science">
        <title>Empirical analysis of transcriptional activity in the Arabidopsis genome.</title>
        <authorList>
            <person name="Yamada K."/>
            <person name="Lim J."/>
            <person name="Dale J.M."/>
            <person name="Chen H."/>
            <person name="Shinn P."/>
            <person name="Palm C.J."/>
            <person name="Southwick A.M."/>
            <person name="Wu H.C."/>
            <person name="Kim C.J."/>
            <person name="Nguyen M."/>
            <person name="Pham P.K."/>
            <person name="Cheuk R.F."/>
            <person name="Karlin-Newmann G."/>
            <person name="Liu S.X."/>
            <person name="Lam B."/>
            <person name="Sakano H."/>
            <person name="Wu T."/>
            <person name="Yu G."/>
            <person name="Miranda M."/>
            <person name="Quach H.L."/>
            <person name="Tripp M."/>
            <person name="Chang C.H."/>
            <person name="Lee J.M."/>
            <person name="Toriumi M.J."/>
            <person name="Chan M.M."/>
            <person name="Tang C.C."/>
            <person name="Onodera C.S."/>
            <person name="Deng J.M."/>
            <person name="Akiyama K."/>
            <person name="Ansari Y."/>
            <person name="Arakawa T."/>
            <person name="Banh J."/>
            <person name="Banno F."/>
            <person name="Bowser L."/>
            <person name="Brooks S.Y."/>
            <person name="Carninci P."/>
            <person name="Chao Q."/>
            <person name="Choy N."/>
            <person name="Enju A."/>
            <person name="Goldsmith A.D."/>
            <person name="Gurjal M."/>
            <person name="Hansen N.F."/>
            <person name="Hayashizaki Y."/>
            <person name="Johnson-Hopson C."/>
            <person name="Hsuan V.W."/>
            <person name="Iida K."/>
            <person name="Karnes M."/>
            <person name="Khan S."/>
            <person name="Koesema E."/>
            <person name="Ishida J."/>
            <person name="Jiang P.X."/>
            <person name="Jones T."/>
            <person name="Kawai J."/>
            <person name="Kamiya A."/>
            <person name="Meyers C."/>
            <person name="Nakajima M."/>
            <person name="Narusaka M."/>
            <person name="Seki M."/>
            <person name="Sakurai T."/>
            <person name="Satou M."/>
            <person name="Tamse R."/>
            <person name="Vaysberg M."/>
            <person name="Wallender E.K."/>
            <person name="Wong C."/>
            <person name="Yamamura Y."/>
            <person name="Yuan S."/>
            <person name="Shinozaki K."/>
            <person name="Davis R.W."/>
            <person name="Theologis A."/>
            <person name="Ecker J.R."/>
        </authorList>
    </citation>
    <scope>NUCLEOTIDE SEQUENCE [LARGE SCALE MRNA]</scope>
    <source>
        <strain>cv. Columbia</strain>
    </source>
</reference>
<reference key="4">
    <citation type="journal article" date="2010" name="Nature">
        <title>Differential innate immune signalling via Ca(2+) sensor protein kinases.</title>
        <authorList>
            <person name="Boudsocq M."/>
            <person name="Willmann M.R."/>
            <person name="McCormack M."/>
            <person name="Lee H."/>
            <person name="Shan L."/>
            <person name="He P."/>
            <person name="Bush J."/>
            <person name="Cheng S.H."/>
            <person name="Sheen J."/>
        </authorList>
    </citation>
    <scope>INDUCTION BY MKK4</scope>
</reference>
<reference key="5">
    <citation type="journal article" date="2012" name="Plant Cell Environ.">
        <title>A subcellular localization compendium of hydrogen peroxide-induced proteins.</title>
        <authorList>
            <person name="Inze A."/>
            <person name="Vanderauwera S."/>
            <person name="Hoeberichts F.A."/>
            <person name="Vandorpe M."/>
            <person name="Van Gaever T."/>
            <person name="Van Breusegem F."/>
        </authorList>
    </citation>
    <scope>SUBCELLULAR LOCATION</scope>
</reference>
<reference key="6">
    <citation type="journal article" date="2015" name="J. Biol. Chem.">
        <title>Oxidation of monolignols by members of the berberine bridge enzyme family suggests a role in plant cell wall metabolism.</title>
        <authorList>
            <person name="Daniel B."/>
            <person name="Pavkov-Keller T."/>
            <person name="Steiner B."/>
            <person name="Dordic A."/>
            <person name="Gutmann A."/>
            <person name="Nidetzky B."/>
            <person name="Sensen C.W."/>
            <person name="van der Graaff E."/>
            <person name="Wallner S."/>
            <person name="Gruber K."/>
            <person name="Macheroux P."/>
        </authorList>
    </citation>
    <scope>GENE FAMILY</scope>
    <scope>NOMENCLATURE</scope>
</reference>
<reference key="7">
    <citation type="journal article" date="2015" name="Nature">
        <title>A new cyanogenic metabolite in Arabidopsis required for inducible pathogen defence.</title>
        <authorList>
            <person name="Rajniak J."/>
            <person name="Barco B."/>
            <person name="Clay N.K."/>
            <person name="Sattely E.S."/>
        </authorList>
    </citation>
    <scope>FUNCTION</scope>
    <scope>DISRUPTION PHENOTYPE</scope>
</reference>
<keyword id="KW-1003">Cell membrane</keyword>
<keyword id="KW-0134">Cell wall</keyword>
<keyword id="KW-1015">Disulfide bond</keyword>
<keyword id="KW-0256">Endoplasmic reticulum</keyword>
<keyword id="KW-0274">FAD</keyword>
<keyword id="KW-0285">Flavoprotein</keyword>
<keyword id="KW-0325">Glycoprotein</keyword>
<keyword id="KW-0472">Membrane</keyword>
<keyword id="KW-0547">Nucleotide-binding</keyword>
<keyword id="KW-0560">Oxidoreductase</keyword>
<keyword id="KW-1185">Reference proteome</keyword>
<keyword id="KW-0964">Secreted</keyword>
<keyword id="KW-0732">Signal</keyword>
<organism>
    <name type="scientific">Arabidopsis thaliana</name>
    <name type="common">Mouse-ear cress</name>
    <dbReference type="NCBI Taxonomy" id="3702"/>
    <lineage>
        <taxon>Eukaryota</taxon>
        <taxon>Viridiplantae</taxon>
        <taxon>Streptophyta</taxon>
        <taxon>Embryophyta</taxon>
        <taxon>Tracheophyta</taxon>
        <taxon>Spermatophyta</taxon>
        <taxon>Magnoliopsida</taxon>
        <taxon>eudicotyledons</taxon>
        <taxon>Gunneridae</taxon>
        <taxon>Pentapetalae</taxon>
        <taxon>rosids</taxon>
        <taxon>malvids</taxon>
        <taxon>Brassicales</taxon>
        <taxon>Brassicaceae</taxon>
        <taxon>Camelineae</taxon>
        <taxon>Arabidopsis</taxon>
    </lineage>
</organism>
<evidence type="ECO:0000250" key="1">
    <source>
        <dbReference type="UniProtKB" id="O64743"/>
    </source>
</evidence>
<evidence type="ECO:0000250" key="2">
    <source>
        <dbReference type="UniProtKB" id="P30986"/>
    </source>
</evidence>
<evidence type="ECO:0000255" key="3"/>
<evidence type="ECO:0000255" key="4">
    <source>
        <dbReference type="PROSITE-ProRule" id="PRU00498"/>
    </source>
</evidence>
<evidence type="ECO:0000255" key="5">
    <source>
        <dbReference type="PROSITE-ProRule" id="PRU00718"/>
    </source>
</evidence>
<evidence type="ECO:0000269" key="6">
    <source>
    </source>
</evidence>
<evidence type="ECO:0000269" key="7">
    <source>
    </source>
</evidence>
<evidence type="ECO:0000269" key="8">
    <source>
    </source>
</evidence>
<evidence type="ECO:0000303" key="9">
    <source>
    </source>
</evidence>
<evidence type="ECO:0000303" key="10">
    <source>
    </source>
</evidence>
<evidence type="ECO:0000303" key="11">
    <source>
    </source>
</evidence>
<evidence type="ECO:0000305" key="12"/>
<evidence type="ECO:0000305" key="13">
    <source>
    </source>
</evidence>
<evidence type="ECO:0000312" key="14">
    <source>
        <dbReference type="Araport" id="AT1G26380"/>
    </source>
</evidence>
<evidence type="ECO:0000312" key="15">
    <source>
        <dbReference type="EMBL" id="AAF98578.1"/>
    </source>
</evidence>
<gene>
    <name evidence="11" type="primary">FOX1</name>
    <name evidence="9" type="synonym">FOX</name>
    <name evidence="14" type="ordered locus">At1g26380</name>
    <name evidence="15" type="ORF">T1K7.24</name>
</gene>
<dbReference type="EC" id="1.1.1.-" evidence="1"/>
<dbReference type="EC" id="1.-.-.-" evidence="13"/>
<dbReference type="EMBL" id="AC013427">
    <property type="protein sequence ID" value="AAF98578.1"/>
    <property type="molecule type" value="Genomic_DNA"/>
</dbReference>
<dbReference type="EMBL" id="CP002684">
    <property type="protein sequence ID" value="AEE30684.1"/>
    <property type="molecule type" value="Genomic_DNA"/>
</dbReference>
<dbReference type="EMBL" id="AF360332">
    <property type="protein sequence ID" value="AAK26042.1"/>
    <property type="molecule type" value="mRNA"/>
</dbReference>
<dbReference type="EMBL" id="AY113892">
    <property type="protein sequence ID" value="AAM44940.1"/>
    <property type="molecule type" value="mRNA"/>
</dbReference>
<dbReference type="PIR" id="E86390">
    <property type="entry name" value="E86390"/>
</dbReference>
<dbReference type="RefSeq" id="NP_564244.1">
    <property type="nucleotide sequence ID" value="NM_102402.4"/>
</dbReference>
<dbReference type="SMR" id="Q9FZC4"/>
<dbReference type="FunCoup" id="Q9FZC4">
    <property type="interactions" value="3"/>
</dbReference>
<dbReference type="STRING" id="3702.Q9FZC4"/>
<dbReference type="GlyCosmos" id="Q9FZC4">
    <property type="glycosylation" value="9 sites, No reported glycans"/>
</dbReference>
<dbReference type="GlyGen" id="Q9FZC4">
    <property type="glycosylation" value="9 sites"/>
</dbReference>
<dbReference type="PaxDb" id="3702-AT1G26380.1"/>
<dbReference type="ProteomicsDB" id="228942"/>
<dbReference type="EnsemblPlants" id="AT1G26380.1">
    <property type="protein sequence ID" value="AT1G26380.1"/>
    <property type="gene ID" value="AT1G26380"/>
</dbReference>
<dbReference type="GeneID" id="839180"/>
<dbReference type="Gramene" id="AT1G26380.1">
    <property type="protein sequence ID" value="AT1G26380.1"/>
    <property type="gene ID" value="AT1G26380"/>
</dbReference>
<dbReference type="KEGG" id="ath:AT1G26380"/>
<dbReference type="Araport" id="AT1G26380"/>
<dbReference type="TAIR" id="AT1G26380">
    <property type="gene designation" value="FOX1"/>
</dbReference>
<dbReference type="eggNOG" id="ENOG502QVGN">
    <property type="taxonomic scope" value="Eukaryota"/>
</dbReference>
<dbReference type="HOGENOM" id="CLU_018354_6_0_1"/>
<dbReference type="InParanoid" id="Q9FZC4"/>
<dbReference type="OMA" id="WAMLPAG"/>
<dbReference type="PhylomeDB" id="Q9FZC4"/>
<dbReference type="BioCyc" id="ARA:AT1G26380-MONOMER"/>
<dbReference type="BioCyc" id="MetaCyc:AT1G26380-MONOMER"/>
<dbReference type="PRO" id="PR:Q9FZC4"/>
<dbReference type="Proteomes" id="UP000006548">
    <property type="component" value="Chromosome 1"/>
</dbReference>
<dbReference type="ExpressionAtlas" id="Q9FZC4">
    <property type="expression patterns" value="baseline and differential"/>
</dbReference>
<dbReference type="GO" id="GO:0005783">
    <property type="term" value="C:endoplasmic reticulum"/>
    <property type="evidence" value="ECO:0000314"/>
    <property type="project" value="TAIR"/>
</dbReference>
<dbReference type="GO" id="GO:0005576">
    <property type="term" value="C:extracellular region"/>
    <property type="evidence" value="ECO:0007669"/>
    <property type="project" value="UniProtKB-KW"/>
</dbReference>
<dbReference type="GO" id="GO:0009505">
    <property type="term" value="C:plant-type cell wall"/>
    <property type="evidence" value="ECO:0000250"/>
    <property type="project" value="UniProtKB"/>
</dbReference>
<dbReference type="GO" id="GO:0005886">
    <property type="term" value="C:plasma membrane"/>
    <property type="evidence" value="ECO:0007669"/>
    <property type="project" value="UniProtKB-SubCell"/>
</dbReference>
<dbReference type="GO" id="GO:0071949">
    <property type="term" value="F:FAD binding"/>
    <property type="evidence" value="ECO:0007669"/>
    <property type="project" value="InterPro"/>
</dbReference>
<dbReference type="GO" id="GO:0016491">
    <property type="term" value="F:oxidoreductase activity"/>
    <property type="evidence" value="ECO:0007669"/>
    <property type="project" value="UniProtKB-KW"/>
</dbReference>
<dbReference type="GO" id="GO:0071456">
    <property type="term" value="P:cellular response to hypoxia"/>
    <property type="evidence" value="ECO:0000270"/>
    <property type="project" value="TAIR"/>
</dbReference>
<dbReference type="FunFam" id="3.30.43.10:FF:000004">
    <property type="entry name" value="Berberine bridge enzyme-like 15"/>
    <property type="match status" value="1"/>
</dbReference>
<dbReference type="Gene3D" id="3.30.465.10">
    <property type="match status" value="1"/>
</dbReference>
<dbReference type="Gene3D" id="3.40.462.20">
    <property type="match status" value="1"/>
</dbReference>
<dbReference type="Gene3D" id="3.30.43.10">
    <property type="entry name" value="Uridine Diphospho-n-acetylenolpyruvylglucosamine Reductase, domain 2"/>
    <property type="match status" value="1"/>
</dbReference>
<dbReference type="InterPro" id="IPR012951">
    <property type="entry name" value="BBE"/>
</dbReference>
<dbReference type="InterPro" id="IPR016166">
    <property type="entry name" value="FAD-bd_PCMH"/>
</dbReference>
<dbReference type="InterPro" id="IPR036318">
    <property type="entry name" value="FAD-bd_PCMH-like_sf"/>
</dbReference>
<dbReference type="InterPro" id="IPR016167">
    <property type="entry name" value="FAD-bd_PCMH_sub1"/>
</dbReference>
<dbReference type="InterPro" id="IPR016169">
    <property type="entry name" value="FAD-bd_PCMH_sub2"/>
</dbReference>
<dbReference type="InterPro" id="IPR006094">
    <property type="entry name" value="Oxid_FAD_bind_N"/>
</dbReference>
<dbReference type="PANTHER" id="PTHR32448">
    <property type="entry name" value="OS08G0158400 PROTEIN"/>
    <property type="match status" value="1"/>
</dbReference>
<dbReference type="Pfam" id="PF08031">
    <property type="entry name" value="BBE"/>
    <property type="match status" value="1"/>
</dbReference>
<dbReference type="Pfam" id="PF01565">
    <property type="entry name" value="FAD_binding_4"/>
    <property type="match status" value="1"/>
</dbReference>
<dbReference type="SUPFAM" id="SSF56176">
    <property type="entry name" value="FAD-binding/transporter-associated domain-like"/>
    <property type="match status" value="1"/>
</dbReference>
<dbReference type="PROSITE" id="PS51387">
    <property type="entry name" value="FAD_PCMH"/>
    <property type="match status" value="1"/>
</dbReference>
<name>FOX1_ARATH</name>
<sequence length="535" mass="59818">MKEALFGLYLVLLVSGLEAAVTKPNSGNFIECLRYQASPENPITDAIFTVDNTTTFLSSYVSYTKNTRFSNPNNKNLLAIVVAKDVSHVQATVVCAKSNGIQIRIRSGGHDNEGLSYVSSVPFVILDMHKLRDITVDVSSKKAWVQAGATLGELYVKIDEASQTLAFPAGICATVGAGGHISGGGYGNLMRKFGTTVDHVIDAELVDVNGKLLNRSTMGEDLFWAIRGGGGASFGVILSWKINLVEVPKIFTVFQVNKTLEQGGTDVVYKWQLVANKFPDNLFLRAMPQVVNGTKHGERTIAIVFWAQFLGRTDELMEIMNQSFPELGLRREDCQEMSWLNTTLFWAMLPAGTPKTVLLGRPTDPVFFKSKSDYVKKPIPKEGLEKIWKTMLKFNNIVWLHFNPYGGMMDRIPSNATAFPHRKGNLFKVQYYTTWLDPNATESNLSIMKELYEVAEPYVSSNPREAFFNYRDIDIGSNPSGETDVDEAKIYGYKYFLGNLKRLMDVKAKSDPENFFKNEQSIPPLLSRVRRDDEL</sequence>
<protein>
    <recommendedName>
        <fullName evidence="10">Berberine bridge enzyme-like 3</fullName>
        <shortName evidence="10">AtBBE-like 3</shortName>
        <ecNumber evidence="1">1.1.1.-</ecNumber>
    </recommendedName>
    <alternativeName>
        <fullName evidence="9">FAD-linked oxidoreductase</fullName>
        <ecNumber evidence="13">1.-.-.-</ecNumber>
    </alternativeName>
    <alternativeName>
        <fullName evidence="11">Flavin-dependent oxidoreductase FOX1</fullName>
    </alternativeName>
</protein>
<feature type="signal peptide" evidence="3">
    <location>
        <begin position="1"/>
        <end position="19"/>
    </location>
</feature>
<feature type="chain" id="PRO_5004329558" description="Berberine bridge enzyme-like 3">
    <location>
        <begin position="20"/>
        <end position="535"/>
    </location>
</feature>
<feature type="domain" description="FAD-binding PCMH-type" evidence="5">
    <location>
        <begin position="73"/>
        <end position="247"/>
    </location>
</feature>
<feature type="glycosylation site" description="N-linked (GlcNAc...) asparagine" evidence="4">
    <location>
        <position position="52"/>
    </location>
</feature>
<feature type="glycosylation site" description="N-linked (GlcNAc...) asparagine" evidence="4">
    <location>
        <position position="214"/>
    </location>
</feature>
<feature type="glycosylation site" description="N-linked (GlcNAc...) asparagine" evidence="4">
    <location>
        <position position="257"/>
    </location>
</feature>
<feature type="glycosylation site" description="N-linked (GlcNAc...) asparagine" evidence="4">
    <location>
        <position position="292"/>
    </location>
</feature>
<feature type="glycosylation site" description="N-linked (GlcNAc...) asparagine" evidence="4">
    <location>
        <position position="321"/>
    </location>
</feature>
<feature type="glycosylation site" description="N-linked (GlcNAc...) asparagine" evidence="4">
    <location>
        <position position="341"/>
    </location>
</feature>
<feature type="glycosylation site" description="N-linked (GlcNAc...) asparagine" evidence="4">
    <location>
        <position position="415"/>
    </location>
</feature>
<feature type="glycosylation site" description="N-linked (GlcNAc...) asparagine" evidence="4">
    <location>
        <position position="439"/>
    </location>
</feature>
<feature type="glycosylation site" description="N-linked (GlcNAc...) asparagine" evidence="4">
    <location>
        <position position="444"/>
    </location>
</feature>
<feature type="disulfide bond" evidence="2">
    <location>
        <begin position="32"/>
        <end position="95"/>
    </location>
</feature>
<feature type="cross-link" description="6-(S-cysteinyl)-8alpha-(pros-histidyl)-FAD (His-Cys)" evidence="1">
    <location>
        <begin position="110"/>
        <end position="172"/>
    </location>
</feature>
<comment type="function">
    <text evidence="8">Flavin-dependent oxidoreductase involved in the biosynthetic pathway to 4-hydroxyindole-3-carbonyl nitrile (4-OH-ICN), a cyanogenic metabolite required for inducible pathogen defense. Converts indole cyanohydrin into indole-3-carbonyl nitrile (ICN).</text>
</comment>
<comment type="cofactor">
    <cofactor evidence="1">
        <name>FAD</name>
        <dbReference type="ChEBI" id="CHEBI:57692"/>
    </cofactor>
    <text evidence="1">Binds 1 FAD per subunit in a bicovalent manner.</text>
</comment>
<comment type="subcellular location">
    <subcellularLocation>
        <location evidence="7">Endoplasmic reticulum</location>
    </subcellularLocation>
    <subcellularLocation>
        <location evidence="7">Cell membrane</location>
    </subcellularLocation>
    <subcellularLocation>
        <location evidence="1">Secreted</location>
        <location evidence="1">Cell wall</location>
    </subcellularLocation>
</comment>
<comment type="induction">
    <text evidence="6">Up-regulated by MKK4.</text>
</comment>
<comment type="PTM">
    <text evidence="1">The FAD cofactor is bound via a bicovalent 6-S-cysteinyl, 8alpha-N1-histidyl FAD linkage.</text>
</comment>
<comment type="disruption phenotype">
    <text evidence="8">Three- to fivefold reduction in levels of ICN metabolites and accumulation of indole cyanogenic glycosides.</text>
</comment>
<comment type="similarity">
    <text evidence="12">Belongs to the oxygen-dependent FAD-linked oxidoreductase family.</text>
</comment>
<proteinExistence type="evidence at transcript level"/>